<reference key="1">
    <citation type="submission" date="1999-12" db="EMBL/GenBank/DDBJ databases">
        <authorList>
            <person name="Hu W.W."/>
            <person name="Pua E.-C."/>
        </authorList>
    </citation>
    <scope>NUCLEOTIDE SEQUENCE [MRNA]</scope>
</reference>
<protein>
    <recommendedName>
        <fullName>S-adenosylmethionine decarboxylase proenzyme 3</fullName>
        <shortName>AdoMetDC 3</shortName>
        <shortName>SAMDC 3</shortName>
        <ecNumber>4.1.1.50</ecNumber>
    </recommendedName>
    <component>
        <recommendedName>
            <fullName>S-adenosylmethionine decarboxylase 3 alpha chain</fullName>
        </recommendedName>
    </component>
    <component>
        <recommendedName>
            <fullName>S-adenosylmethionine decarboxylase 3 beta chain</fullName>
        </recommendedName>
    </component>
</protein>
<organism>
    <name type="scientific">Brassica juncea</name>
    <name type="common">Indian mustard</name>
    <name type="synonym">Sinapis juncea</name>
    <dbReference type="NCBI Taxonomy" id="3707"/>
    <lineage>
        <taxon>Eukaryota</taxon>
        <taxon>Viridiplantae</taxon>
        <taxon>Streptophyta</taxon>
        <taxon>Embryophyta</taxon>
        <taxon>Tracheophyta</taxon>
        <taxon>Spermatophyta</taxon>
        <taxon>Magnoliopsida</taxon>
        <taxon>eudicotyledons</taxon>
        <taxon>Gunneridae</taxon>
        <taxon>Pentapetalae</taxon>
        <taxon>rosids</taxon>
        <taxon>malvids</taxon>
        <taxon>Brassicales</taxon>
        <taxon>Brassicaceae</taxon>
        <taxon>Brassiceae</taxon>
        <taxon>Brassica</taxon>
    </lineage>
</organism>
<comment type="catalytic activity">
    <reaction>
        <text>S-adenosyl-L-methionine + H(+) = S-adenosyl 3-(methylsulfanyl)propylamine + CO2</text>
        <dbReference type="Rhea" id="RHEA:15981"/>
        <dbReference type="ChEBI" id="CHEBI:15378"/>
        <dbReference type="ChEBI" id="CHEBI:16526"/>
        <dbReference type="ChEBI" id="CHEBI:57443"/>
        <dbReference type="ChEBI" id="CHEBI:59789"/>
        <dbReference type="EC" id="4.1.1.50"/>
    </reaction>
</comment>
<comment type="cofactor">
    <cofactor evidence="1">
        <name>pyruvate</name>
        <dbReference type="ChEBI" id="CHEBI:15361"/>
    </cofactor>
    <text evidence="1">Binds 1 pyruvoyl group covalently per subunit.</text>
</comment>
<comment type="pathway">
    <text>Amine and polyamine biosynthesis; S-adenosylmethioninamine biosynthesis; S-adenosylmethioninamine from S-adenosyl-L-methionine: step 1/1.</text>
</comment>
<comment type="PTM">
    <text evidence="1">Is synthesized initially as an inactive proenzyme. Formation of the active enzyme involves a self-maturation process in which the active site pyruvoyl group is generated from an internal serine residue via an autocatalytic post-translational modification. Two non-identical subunits are generated from the proenzyme in this reaction, and the pyruvate is formed at the N-terminus of the alpha chain, which is derived from the carboxyl end of the proenzyme. The post-translation cleavage follows an unusual pathway, termed non-hydrolytic serinolysis, in which the side chain hydroxyl group of the serine supplies its oxygen atom to form the C-terminus of the beta chain, while the remainder of the serine residue undergoes an oxidative deamination to produce ammonia and the pyruvoyl group blocking the N-terminus of the alpha chain (By similarity).</text>
</comment>
<comment type="similarity">
    <text evidence="2">Belongs to the eukaryotic AdoMetDC family.</text>
</comment>
<evidence type="ECO:0000250" key="1"/>
<evidence type="ECO:0000305" key="2"/>
<gene>
    <name type="primary">SAMDC3</name>
</gene>
<accession>Q9SDM8</accession>
<name>DCAM3_BRAJU</name>
<feature type="chain" id="PRO_0000029995" description="S-adenosylmethionine decarboxylase 3 beta chain" evidence="1">
    <location>
        <begin position="1"/>
        <end position="68"/>
    </location>
</feature>
<feature type="chain" id="PRO_0000029996" description="S-adenosylmethionine decarboxylase 3 alpha chain" evidence="1">
    <location>
        <begin position="69"/>
        <end position="367"/>
    </location>
</feature>
<feature type="active site" evidence="1">
    <location>
        <position position="9"/>
    </location>
</feature>
<feature type="active site" evidence="1">
    <location>
        <position position="12"/>
    </location>
</feature>
<feature type="active site" description="Schiff-base intermediate with substrate; via pyruvic acid" evidence="1">
    <location>
        <position position="69"/>
    </location>
</feature>
<feature type="active site" description="Proton donor; for catalytic activity" evidence="1">
    <location>
        <position position="83"/>
    </location>
</feature>
<feature type="active site" description="Proton acceptor; for processing activity" evidence="1">
    <location>
        <position position="234"/>
    </location>
</feature>
<feature type="active site" description="Proton acceptor; for processing activity" evidence="1">
    <location>
        <position position="247"/>
    </location>
</feature>
<feature type="site" description="Cleavage (non-hydrolytic); by autolysis" evidence="1">
    <location>
        <begin position="68"/>
        <end position="69"/>
    </location>
</feature>
<feature type="modified residue" description="Pyruvic acid (Ser); by autocatalysis" evidence="1">
    <location>
        <position position="69"/>
    </location>
</feature>
<sequence length="367" mass="40489">MALSAIGFEGYEKRLEVSFFEPSFFQDSKGLGLRALTRSQLDEILTPAACEIVSSLSNDHLDSYVLSESSFFVYPYKVIIKTCGTTKLLLSIPPLLKLAGELSLSVKSVKYTRGSFLCPGGQPFPHRSFSEEVSVLDGHFTKLGLNSVAYLMGNDDENKKWHVYAASAQTSSDCNNNVYTLEMCMTGLDKEKASVFYKNETGGENGSMTDNSGIRKILPKSQICDFEFEPCGYSMNSVEGDAISTIHVTPEDGFSYASFEAVGYDFNTLDLSQLVTRVLSCFEPKQFSVAVHSSVGSNAYKPEISVDLEDYGCRERTFESLGEESGTVMYQTFEKLGKYCGSPRSTLKCEWSSNNSCSSEDEKDEGI</sequence>
<proteinExistence type="evidence at transcript level"/>
<dbReference type="EC" id="4.1.1.50"/>
<dbReference type="EMBL" id="AF215665">
    <property type="protein sequence ID" value="AAF20160.1"/>
    <property type="molecule type" value="mRNA"/>
</dbReference>
<dbReference type="SMR" id="Q9SDM8"/>
<dbReference type="EnsemblPlants" id="mRNA.BjuA03g30190S">
    <property type="protein sequence ID" value="cds.BjuA03g30190S"/>
    <property type="gene ID" value="BjuA03g30190S"/>
</dbReference>
<dbReference type="Gramene" id="mRNA.BjuA03g30190S">
    <property type="protein sequence ID" value="cds.BjuA03g30190S"/>
    <property type="gene ID" value="BjuA03g30190S"/>
</dbReference>
<dbReference type="BRENDA" id="4.1.1.50">
    <property type="organism ID" value="941"/>
</dbReference>
<dbReference type="UniPathway" id="UPA00331">
    <property type="reaction ID" value="UER00451"/>
</dbReference>
<dbReference type="GO" id="GO:0005829">
    <property type="term" value="C:cytosol"/>
    <property type="evidence" value="ECO:0007669"/>
    <property type="project" value="TreeGrafter"/>
</dbReference>
<dbReference type="GO" id="GO:0004014">
    <property type="term" value="F:adenosylmethionine decarboxylase activity"/>
    <property type="evidence" value="ECO:0007669"/>
    <property type="project" value="UniProtKB-EC"/>
</dbReference>
<dbReference type="GO" id="GO:0008295">
    <property type="term" value="P:spermidine biosynthetic process"/>
    <property type="evidence" value="ECO:0007669"/>
    <property type="project" value="UniProtKB-KW"/>
</dbReference>
<dbReference type="GO" id="GO:0006597">
    <property type="term" value="P:spermine biosynthetic process"/>
    <property type="evidence" value="ECO:0007669"/>
    <property type="project" value="InterPro"/>
</dbReference>
<dbReference type="FunFam" id="3.30.360.50:FF:000001">
    <property type="entry name" value="S-adenosylmethionine decarboxylase proenzyme"/>
    <property type="match status" value="1"/>
</dbReference>
<dbReference type="FunFam" id="3.60.90.10:FF:000002">
    <property type="entry name" value="S-adenosylmethionine decarboxylase proenzyme"/>
    <property type="match status" value="1"/>
</dbReference>
<dbReference type="Gene3D" id="3.30.360.50">
    <property type="entry name" value="S-adenosylmethionine decarboxylase"/>
    <property type="match status" value="1"/>
</dbReference>
<dbReference type="Gene3D" id="3.60.90.10">
    <property type="entry name" value="S-adenosylmethionine decarboxylase"/>
    <property type="match status" value="1"/>
</dbReference>
<dbReference type="InterPro" id="IPR048283">
    <property type="entry name" value="AdoMetDC-like"/>
</dbReference>
<dbReference type="InterPro" id="IPR001985">
    <property type="entry name" value="S-AdoMet_decarboxylase_euk"/>
</dbReference>
<dbReference type="InterPro" id="IPR016067">
    <property type="entry name" value="S-AdoMet_deCO2ase_core"/>
</dbReference>
<dbReference type="InterPro" id="IPR018166">
    <property type="entry name" value="S-AdoMet_deCO2ase_CS"/>
</dbReference>
<dbReference type="NCBIfam" id="TIGR00535">
    <property type="entry name" value="SAM_DCase"/>
    <property type="match status" value="1"/>
</dbReference>
<dbReference type="PANTHER" id="PTHR11570">
    <property type="entry name" value="S-ADENOSYLMETHIONINE DECARBOXYLASE"/>
    <property type="match status" value="1"/>
</dbReference>
<dbReference type="PANTHER" id="PTHR11570:SF34">
    <property type="entry name" value="S-ADENOSYLMETHIONINE DECARBOXYLASE PROENZYME 1"/>
    <property type="match status" value="1"/>
</dbReference>
<dbReference type="Pfam" id="PF01536">
    <property type="entry name" value="SAM_decarbox"/>
    <property type="match status" value="1"/>
</dbReference>
<dbReference type="PIRSF" id="PIRSF001355">
    <property type="entry name" value="S-AdenosylMet_decarboxylase"/>
    <property type="match status" value="1"/>
</dbReference>
<dbReference type="SUPFAM" id="SSF56276">
    <property type="entry name" value="S-adenosylmethionine decarboxylase"/>
    <property type="match status" value="1"/>
</dbReference>
<dbReference type="PROSITE" id="PS01336">
    <property type="entry name" value="ADOMETDC"/>
    <property type="match status" value="1"/>
</dbReference>
<keyword id="KW-0068">Autocatalytic cleavage</keyword>
<keyword id="KW-0210">Decarboxylase</keyword>
<keyword id="KW-0456">Lyase</keyword>
<keyword id="KW-0620">Polyamine biosynthesis</keyword>
<keyword id="KW-0670">Pyruvate</keyword>
<keyword id="KW-0949">S-adenosyl-L-methionine</keyword>
<keyword id="KW-0704">Schiff base</keyword>
<keyword id="KW-0745">Spermidine biosynthesis</keyword>
<keyword id="KW-0865">Zymogen</keyword>